<reference key="1">
    <citation type="journal article" date="1987" name="J. Biol. Chem.">
        <title>Purification and characterization of the S-adenosylmethionine:glutamyl methyltransferase that modifies membrane chemoreceptor proteins in bacteria.</title>
        <authorList>
            <person name="Simms S.A."/>
            <person name="Stock A.M."/>
            <person name="Stock J.B."/>
        </authorList>
    </citation>
    <scope>NUCLEOTIDE SEQUENCE [GENOMIC DNA]</scope>
</reference>
<reference key="2">
    <citation type="journal article" date="2001" name="Nature">
        <title>Complete genome sequence of Salmonella enterica serovar Typhimurium LT2.</title>
        <authorList>
            <person name="McClelland M."/>
            <person name="Sanderson K.E."/>
            <person name="Spieth J."/>
            <person name="Clifton S.W."/>
            <person name="Latreille P."/>
            <person name="Courtney L."/>
            <person name="Porwollik S."/>
            <person name="Ali J."/>
            <person name="Dante M."/>
            <person name="Du F."/>
            <person name="Hou S."/>
            <person name="Layman D."/>
            <person name="Leonard S."/>
            <person name="Nguyen C."/>
            <person name="Scott K."/>
            <person name="Holmes A."/>
            <person name="Grewal N."/>
            <person name="Mulvaney E."/>
            <person name="Ryan E."/>
            <person name="Sun H."/>
            <person name="Florea L."/>
            <person name="Miller W."/>
            <person name="Stoneking T."/>
            <person name="Nhan M."/>
            <person name="Waterston R."/>
            <person name="Wilson R.K."/>
        </authorList>
    </citation>
    <scope>NUCLEOTIDE SEQUENCE [LARGE SCALE GENOMIC DNA]</scope>
    <source>
        <strain>LT2 / SGSC1412 / ATCC 700720</strain>
    </source>
</reference>
<reference key="3">
    <citation type="journal article" date="1997" name="Structure">
        <title>Crystal structure of the chemotaxis receptor methyltransferase CheR suggests a conserved structural motif for binding S-adenosylmethionine.</title>
        <authorList>
            <person name="Djordjevic S."/>
            <person name="Stock A.M."/>
        </authorList>
    </citation>
    <scope>X-RAY CRYSTALLOGRAPHY (2.0 ANGSTROMS) OF 11-284 IN COMPLEX WITH S-ADENOSYL-L-HOMOCYSTEINE</scope>
</reference>
<reference key="4">
    <citation type="journal article" date="1998" name="Nat. Struct. Biol.">
        <title>Chemotaxis receptor recognition by protein methyltransferase CheR.</title>
        <authorList>
            <person name="Djordjevic S."/>
            <person name="Stock A.M."/>
        </authorList>
    </citation>
    <scope>X-RAY CRYSTALLOGRAPHY (2.2 ANGSTROMS) OF 16-284 IN COMPLEX WITH S-ADENOSYL-L-HOMOCYSTEINE AND TAR</scope>
</reference>
<sequence>MTSSLPSGQTSVLLQMTQRLALSDAHFRRICQLIYQRAGIVLADHKRDMVYNRLVRRLRALGLDDFGRYLSMLEANQNSAEWQAFINALTTNLTAFFREAHHFPILAEHARRRHGEYRVWSAAASTGEEPYSIAITLADALGMAPGRWKVFASDIDTEVLEKARSGIYRLSELKTLSPQQLQRYFMRGTGPHEGLVRVRQELANYVEFSSVNLLEKQYNVPGPFDAIFCRNVMIYFDKTTQEDILRRFVPLLKPDGLLFAGHSENFSNLVREFSLRGQTVYALSKDKA</sequence>
<keyword id="KW-0002">3D-structure</keyword>
<keyword id="KW-0145">Chemotaxis</keyword>
<keyword id="KW-0489">Methyltransferase</keyword>
<keyword id="KW-1185">Reference proteome</keyword>
<keyword id="KW-0949">S-adenosyl-L-methionine</keyword>
<keyword id="KW-0808">Transferase</keyword>
<comment type="function">
    <text>Methylation of the membrane-bound methyl-accepting chemotaxis proteins (MCP) to form gamma-glutamyl methyl ester residues in MCP.</text>
</comment>
<comment type="catalytic activity">
    <reaction>
        <text>L-glutamyl-[protein] + S-adenosyl-L-methionine = [protein]-L-glutamate 5-O-methyl ester + S-adenosyl-L-homocysteine</text>
        <dbReference type="Rhea" id="RHEA:24452"/>
        <dbReference type="Rhea" id="RHEA-COMP:10208"/>
        <dbReference type="Rhea" id="RHEA-COMP:10311"/>
        <dbReference type="ChEBI" id="CHEBI:29973"/>
        <dbReference type="ChEBI" id="CHEBI:57856"/>
        <dbReference type="ChEBI" id="CHEBI:59789"/>
        <dbReference type="ChEBI" id="CHEBI:82795"/>
        <dbReference type="EC" id="2.1.1.80"/>
    </reaction>
</comment>
<evidence type="ECO:0000255" key="1">
    <source>
        <dbReference type="PROSITE-ProRule" id="PRU00051"/>
    </source>
</evidence>
<evidence type="ECO:0007829" key="2">
    <source>
        <dbReference type="PDB" id="1AF7"/>
    </source>
</evidence>
<evidence type="ECO:0007829" key="3">
    <source>
        <dbReference type="PDB" id="1BC5"/>
    </source>
</evidence>
<name>CHER_SALTY</name>
<accession>P07801</accession>
<feature type="chain" id="PRO_0000176039" description="Chemotaxis protein methyltransferase">
    <location>
        <begin position="1"/>
        <end position="288"/>
    </location>
</feature>
<feature type="domain" description="CheR-type methyltransferase" evidence="1">
    <location>
        <begin position="15"/>
        <end position="286"/>
    </location>
</feature>
<feature type="binding site">
    <location>
        <position position="92"/>
    </location>
    <ligand>
        <name>S-adenosyl-L-methionine</name>
        <dbReference type="ChEBI" id="CHEBI:59789"/>
    </ligand>
</feature>
<feature type="binding site">
    <location>
        <position position="94"/>
    </location>
    <ligand>
        <name>S-adenosyl-L-methionine</name>
        <dbReference type="ChEBI" id="CHEBI:59789"/>
    </ligand>
</feature>
<feature type="binding site">
    <location>
        <position position="98"/>
    </location>
    <ligand>
        <name>S-adenosyl-L-methionine</name>
        <dbReference type="ChEBI" id="CHEBI:59789"/>
    </ligand>
</feature>
<feature type="binding site">
    <location>
        <position position="129"/>
    </location>
    <ligand>
        <name>S-adenosyl-L-methionine</name>
        <dbReference type="ChEBI" id="CHEBI:59789"/>
    </ligand>
</feature>
<feature type="binding site">
    <location>
        <position position="154"/>
    </location>
    <ligand>
        <name>S-adenosyl-L-methionine</name>
        <dbReference type="ChEBI" id="CHEBI:59789"/>
    </ligand>
</feature>
<feature type="binding site">
    <location>
        <begin position="212"/>
        <end position="213"/>
    </location>
    <ligand>
        <name>S-adenosyl-L-methionine</name>
        <dbReference type="ChEBI" id="CHEBI:59789"/>
    </ligand>
</feature>
<feature type="binding site">
    <location>
        <begin position="230"/>
        <end position="231"/>
    </location>
    <ligand>
        <name>S-adenosyl-L-methionine</name>
        <dbReference type="ChEBI" id="CHEBI:59789"/>
    </ligand>
</feature>
<feature type="helix" evidence="2">
    <location>
        <begin position="24"/>
        <end position="38"/>
    </location>
</feature>
<feature type="helix" evidence="2">
    <location>
        <begin position="44"/>
        <end position="46"/>
    </location>
</feature>
<feature type="helix" evidence="2">
    <location>
        <begin position="47"/>
        <end position="61"/>
    </location>
</feature>
<feature type="helix" evidence="2">
    <location>
        <begin position="66"/>
        <end position="75"/>
    </location>
</feature>
<feature type="helix" evidence="2">
    <location>
        <begin position="81"/>
        <end position="89"/>
    </location>
</feature>
<feature type="turn" evidence="2">
    <location>
        <begin position="96"/>
        <end position="101"/>
    </location>
</feature>
<feature type="helix" evidence="2">
    <location>
        <begin position="102"/>
        <end position="112"/>
    </location>
</feature>
<feature type="strand" evidence="2">
    <location>
        <begin position="117"/>
        <end position="122"/>
    </location>
</feature>
<feature type="turn" evidence="2">
    <location>
        <begin position="125"/>
        <end position="127"/>
    </location>
</feature>
<feature type="helix" evidence="2">
    <location>
        <begin position="128"/>
        <end position="141"/>
    </location>
</feature>
<feature type="strand" evidence="2">
    <location>
        <begin position="147"/>
        <end position="155"/>
    </location>
</feature>
<feature type="helix" evidence="2">
    <location>
        <begin position="157"/>
        <end position="165"/>
    </location>
</feature>
<feature type="strand" evidence="2">
    <location>
        <begin position="167"/>
        <end position="169"/>
    </location>
</feature>
<feature type="helix" evidence="2">
    <location>
        <begin position="170"/>
        <end position="173"/>
    </location>
</feature>
<feature type="helix" evidence="2">
    <location>
        <begin position="178"/>
        <end position="184"/>
    </location>
</feature>
<feature type="strand" evidence="2">
    <location>
        <begin position="185"/>
        <end position="187"/>
    </location>
</feature>
<feature type="helix" evidence="3">
    <location>
        <begin position="190"/>
        <end position="192"/>
    </location>
</feature>
<feature type="strand" evidence="2">
    <location>
        <begin position="194"/>
        <end position="198"/>
    </location>
</feature>
<feature type="helix" evidence="2">
    <location>
        <begin position="200"/>
        <end position="203"/>
    </location>
</feature>
<feature type="strand" evidence="2">
    <location>
        <begin position="206"/>
        <end position="210"/>
    </location>
</feature>
<feature type="strand" evidence="2">
    <location>
        <begin position="224"/>
        <end position="229"/>
    </location>
</feature>
<feature type="helix" evidence="2">
    <location>
        <begin position="233"/>
        <end position="235"/>
    </location>
</feature>
<feature type="helix" evidence="2">
    <location>
        <begin position="238"/>
        <end position="248"/>
    </location>
</feature>
<feature type="helix" evidence="2">
    <location>
        <begin position="249"/>
        <end position="251"/>
    </location>
</feature>
<feature type="strand" evidence="2">
    <location>
        <begin position="252"/>
        <end position="260"/>
    </location>
</feature>
<feature type="turn" evidence="2">
    <location>
        <begin position="267"/>
        <end position="269"/>
    </location>
</feature>
<feature type="strand" evidence="2">
    <location>
        <begin position="273"/>
        <end position="277"/>
    </location>
</feature>
<feature type="strand" evidence="2">
    <location>
        <begin position="280"/>
        <end position="283"/>
    </location>
</feature>
<protein>
    <recommendedName>
        <fullName>Chemotaxis protein methyltransferase</fullName>
        <ecNumber>2.1.1.80</ecNumber>
    </recommendedName>
</protein>
<organism>
    <name type="scientific">Salmonella typhimurium (strain LT2 / SGSC1412 / ATCC 700720)</name>
    <dbReference type="NCBI Taxonomy" id="99287"/>
    <lineage>
        <taxon>Bacteria</taxon>
        <taxon>Pseudomonadati</taxon>
        <taxon>Pseudomonadota</taxon>
        <taxon>Gammaproteobacteria</taxon>
        <taxon>Enterobacterales</taxon>
        <taxon>Enterobacteriaceae</taxon>
        <taxon>Salmonella</taxon>
    </lineage>
</organism>
<dbReference type="EC" id="2.1.1.80"/>
<dbReference type="EMBL" id="J02757">
    <property type="protein sequence ID" value="AAA27035.1"/>
    <property type="molecule type" value="Genomic_DNA"/>
</dbReference>
<dbReference type="EMBL" id="AE006468">
    <property type="protein sequence ID" value="AAL20834.1"/>
    <property type="molecule type" value="Genomic_DNA"/>
</dbReference>
<dbReference type="PIR" id="A29303">
    <property type="entry name" value="XYEBGM"/>
</dbReference>
<dbReference type="RefSeq" id="NP_460875.1">
    <property type="nucleotide sequence ID" value="NC_003197.2"/>
</dbReference>
<dbReference type="RefSeq" id="WP_000204362.1">
    <property type="nucleotide sequence ID" value="NC_003197.2"/>
</dbReference>
<dbReference type="PDB" id="1AF7">
    <property type="method" value="X-ray"/>
    <property type="resolution" value="2.00 A"/>
    <property type="chains" value="A=11-284"/>
</dbReference>
<dbReference type="PDB" id="1BC5">
    <property type="method" value="X-ray"/>
    <property type="resolution" value="2.20 A"/>
    <property type="chains" value="A=16-284"/>
</dbReference>
<dbReference type="PDBsum" id="1AF7"/>
<dbReference type="PDBsum" id="1BC5"/>
<dbReference type="SMR" id="P07801"/>
<dbReference type="STRING" id="99287.STM1918"/>
<dbReference type="DrugBank" id="DB01752">
    <property type="generic name" value="S-adenosyl-L-homocysteine"/>
</dbReference>
<dbReference type="PaxDb" id="99287-STM1918"/>
<dbReference type="GeneID" id="1253439"/>
<dbReference type="KEGG" id="stm:STM1918"/>
<dbReference type="PATRIC" id="fig|99287.12.peg.2034"/>
<dbReference type="HOGENOM" id="CLU_025854_0_0_6"/>
<dbReference type="OMA" id="TEQIIMP"/>
<dbReference type="PhylomeDB" id="P07801"/>
<dbReference type="BioCyc" id="SENT99287:STM1918-MONOMER"/>
<dbReference type="EvolutionaryTrace" id="P07801"/>
<dbReference type="PHI-base" id="PHI:11916"/>
<dbReference type="Proteomes" id="UP000001014">
    <property type="component" value="Chromosome"/>
</dbReference>
<dbReference type="GO" id="GO:0098561">
    <property type="term" value="C:methyl accepting chemotaxis protein complex"/>
    <property type="evidence" value="ECO:0000318"/>
    <property type="project" value="GO_Central"/>
</dbReference>
<dbReference type="GO" id="GO:0008276">
    <property type="term" value="F:protein methyltransferase activity"/>
    <property type="evidence" value="ECO:0000318"/>
    <property type="project" value="GO_Central"/>
</dbReference>
<dbReference type="GO" id="GO:0008983">
    <property type="term" value="F:protein-glutamate O-methyltransferase activity"/>
    <property type="evidence" value="ECO:0007669"/>
    <property type="project" value="UniProtKB-EC"/>
</dbReference>
<dbReference type="GO" id="GO:0006935">
    <property type="term" value="P:chemotaxis"/>
    <property type="evidence" value="ECO:0000318"/>
    <property type="project" value="GO_Central"/>
</dbReference>
<dbReference type="GO" id="GO:0032259">
    <property type="term" value="P:methylation"/>
    <property type="evidence" value="ECO:0007669"/>
    <property type="project" value="UniProtKB-KW"/>
</dbReference>
<dbReference type="CDD" id="cd02440">
    <property type="entry name" value="AdoMet_MTases"/>
    <property type="match status" value="1"/>
</dbReference>
<dbReference type="Gene3D" id="1.10.155.10">
    <property type="entry name" value="Chemotaxis receptor methyltransferase CheR, N-terminal domain"/>
    <property type="match status" value="1"/>
</dbReference>
<dbReference type="Gene3D" id="3.40.50.150">
    <property type="entry name" value="Vaccinia Virus protein VP39"/>
    <property type="match status" value="1"/>
</dbReference>
<dbReference type="InterPro" id="IPR050903">
    <property type="entry name" value="Bact_Chemotaxis_MeTrfase"/>
</dbReference>
<dbReference type="InterPro" id="IPR026024">
    <property type="entry name" value="Chemotaxis_MeTrfase_CheR"/>
</dbReference>
<dbReference type="InterPro" id="IPR022642">
    <property type="entry name" value="CheR_C"/>
</dbReference>
<dbReference type="InterPro" id="IPR000780">
    <property type="entry name" value="CheR_MeTrfase"/>
</dbReference>
<dbReference type="InterPro" id="IPR022641">
    <property type="entry name" value="CheR_N"/>
</dbReference>
<dbReference type="InterPro" id="IPR036804">
    <property type="entry name" value="CheR_N_sf"/>
</dbReference>
<dbReference type="InterPro" id="IPR029063">
    <property type="entry name" value="SAM-dependent_MTases_sf"/>
</dbReference>
<dbReference type="NCBIfam" id="NF007902">
    <property type="entry name" value="PRK10611.1"/>
    <property type="match status" value="1"/>
</dbReference>
<dbReference type="PANTHER" id="PTHR24422">
    <property type="entry name" value="CHEMOTAXIS PROTEIN METHYLTRANSFERASE"/>
    <property type="match status" value="1"/>
</dbReference>
<dbReference type="PANTHER" id="PTHR24422:SF19">
    <property type="entry name" value="CHEMOTAXIS PROTEIN METHYLTRANSFERASE"/>
    <property type="match status" value="1"/>
</dbReference>
<dbReference type="Pfam" id="PF01739">
    <property type="entry name" value="CheR"/>
    <property type="match status" value="1"/>
</dbReference>
<dbReference type="Pfam" id="PF03705">
    <property type="entry name" value="CheR_N"/>
    <property type="match status" value="1"/>
</dbReference>
<dbReference type="PIRSF" id="PIRSF000410">
    <property type="entry name" value="CheR"/>
    <property type="match status" value="1"/>
</dbReference>
<dbReference type="PRINTS" id="PR00996">
    <property type="entry name" value="CHERMTFRASE"/>
</dbReference>
<dbReference type="SMART" id="SM00138">
    <property type="entry name" value="MeTrc"/>
    <property type="match status" value="1"/>
</dbReference>
<dbReference type="SUPFAM" id="SSF47757">
    <property type="entry name" value="Chemotaxis receptor methyltransferase CheR, N-terminal domain"/>
    <property type="match status" value="1"/>
</dbReference>
<dbReference type="SUPFAM" id="SSF53335">
    <property type="entry name" value="S-adenosyl-L-methionine-dependent methyltransferases"/>
    <property type="match status" value="1"/>
</dbReference>
<dbReference type="PROSITE" id="PS50123">
    <property type="entry name" value="CHER"/>
    <property type="match status" value="1"/>
</dbReference>
<proteinExistence type="evidence at protein level"/>
<gene>
    <name type="primary">cheR</name>
    <name type="ordered locus">STM1918</name>
</gene>